<name>TOP1_PSEAE</name>
<proteinExistence type="inferred from homology"/>
<sequence>MGKSLVIVESPAKAKTINKYLGSQYVVKSSIGHIRDLPTSGSSSSKEPAAKGRKSASEAPALSPKEKARRQLVSRMGVDPEHGWKAKYEILPGKEKVIDELRRLAKDADTVYLATDLDREGEAIAWHLREAIGGDESRYKRVVFNEITKKAIQEAFSQPGELDINRVNAQQARRFLDRVVGYMVSPLLWQKIARGLSAGRVQSVAVKLVVEREREIRAFVPEEYWEVHADLGTAKGANVRFEVTREKGEAFKPLNEAQAMAALEKLKASAYSVAKREDRPTSSRPSAPFITSTLQQAASNRLGFGVKKTMMMAQRLYEAGYITYMRTDSTNLSADAIGMVRGFIEDEFGQKYLPGKANVYSSKEGAQEAHEAIRPSDVNLKPTQLSGMERDAERLYDLIWRQFVACQMTPAEYLSTSVSVTAGDFELRAKGRILKFDGYTRVLPQQSKPGEDDVLPEMKEGENLKLIKLDPSQHFTKPPARYSEASLVKELEKRGIGRPSTYAAIISTIQERGYVTTHNRRFYAEKMGDIVTDRLNESFANLMDYGFTAGMEEHLDDVAQGERDWKHLLDEFYGDFKKKLEVAEVSEKGMRANQPTLTNIPCRECGRPMMIRTASTGVFLGCSGYSLPPKERCKATVNLIPGDEIAADDEGESESRVLRGKHRCPICSTAMDAYLLDEKHKLHICGNNPDCPGYEIEEGQYRIKGYEGPSLECDKCGSEMQLKTGRFGKFFGCTNPTCKNTRKLLKNGEAAPPKMDAIRMPELKCEKVDDIYVLRDGASGMFLAASQFPKNRETRAPLVSEIIPHKAELDPKYHYLCDAPQKDPDGRPAVIRFSRKTKEQYVQSEVDGKPTGWRAFYDGGKWKVEDKR</sequence>
<protein>
    <recommendedName>
        <fullName evidence="1">DNA topoisomerase 1</fullName>
        <ecNumber evidence="1">5.6.2.1</ecNumber>
    </recommendedName>
    <alternativeName>
        <fullName evidence="1">DNA topoisomerase I</fullName>
    </alternativeName>
    <alternativeName>
        <fullName>Omega-protein</fullName>
    </alternativeName>
    <alternativeName>
        <fullName>Relaxing enzyme</fullName>
    </alternativeName>
    <alternativeName>
        <fullName>Swivelase</fullName>
    </alternativeName>
    <alternativeName>
        <fullName>Untwisting enzyme</fullName>
    </alternativeName>
</protein>
<keyword id="KW-0238">DNA-binding</keyword>
<keyword id="KW-0413">Isomerase</keyword>
<keyword id="KW-0460">Magnesium</keyword>
<keyword id="KW-0479">Metal-binding</keyword>
<keyword id="KW-1185">Reference proteome</keyword>
<keyword id="KW-0677">Repeat</keyword>
<keyword id="KW-0799">Topoisomerase</keyword>
<keyword id="KW-0862">Zinc</keyword>
<keyword id="KW-0863">Zinc-finger</keyword>
<comment type="function">
    <text evidence="1">Releases the supercoiling and torsional tension of DNA, which is introduced during the DNA replication and transcription, by transiently cleaving and rejoining one strand of the DNA duplex. Introduces a single-strand break via transesterification at a target site in duplex DNA. The scissile phosphodiester is attacked by the catalytic tyrosine of the enzyme, resulting in the formation of a DNA-(5'-phosphotyrosyl)-enzyme intermediate and the expulsion of a 3'-OH DNA strand. The free DNA strand then undergoes passage around the unbroken strand, thus removing DNA supercoils. Finally, in the religation step, the DNA 3'-OH attacks the covalent intermediate to expel the active-site tyrosine and restore the DNA phosphodiester backbone.</text>
</comment>
<comment type="catalytic activity">
    <reaction evidence="1">
        <text>ATP-independent breakage of single-stranded DNA, followed by passage and rejoining.</text>
        <dbReference type="EC" id="5.6.2.1"/>
    </reaction>
</comment>
<comment type="cofactor">
    <cofactor evidence="1">
        <name>Mg(2+)</name>
        <dbReference type="ChEBI" id="CHEBI:18420"/>
    </cofactor>
</comment>
<comment type="subunit">
    <text evidence="1">Monomer.</text>
</comment>
<comment type="similarity">
    <text evidence="1">Belongs to the type IA topoisomerase family.</text>
</comment>
<accession>Q9HZJ5</accession>
<evidence type="ECO:0000255" key="1">
    <source>
        <dbReference type="HAMAP-Rule" id="MF_00952"/>
    </source>
</evidence>
<evidence type="ECO:0000255" key="2">
    <source>
        <dbReference type="PROSITE-ProRule" id="PRU01383"/>
    </source>
</evidence>
<evidence type="ECO:0000256" key="3">
    <source>
        <dbReference type="SAM" id="MobiDB-lite"/>
    </source>
</evidence>
<gene>
    <name evidence="1" type="primary">topA</name>
    <name type="ordered locus">PA3011</name>
</gene>
<organism>
    <name type="scientific">Pseudomonas aeruginosa (strain ATCC 15692 / DSM 22644 / CIP 104116 / JCM 14847 / LMG 12228 / 1C / PRS 101 / PAO1)</name>
    <dbReference type="NCBI Taxonomy" id="208964"/>
    <lineage>
        <taxon>Bacteria</taxon>
        <taxon>Pseudomonadati</taxon>
        <taxon>Pseudomonadota</taxon>
        <taxon>Gammaproteobacteria</taxon>
        <taxon>Pseudomonadales</taxon>
        <taxon>Pseudomonadaceae</taxon>
        <taxon>Pseudomonas</taxon>
    </lineage>
</organism>
<feature type="chain" id="PRO_0000145161" description="DNA topoisomerase 1">
    <location>
        <begin position="1"/>
        <end position="868"/>
    </location>
</feature>
<feature type="domain" description="Toprim" evidence="1">
    <location>
        <begin position="3"/>
        <end position="147"/>
    </location>
</feature>
<feature type="domain" description="Topo IA-type catalytic" evidence="2">
    <location>
        <begin position="163"/>
        <end position="580"/>
    </location>
</feature>
<feature type="zinc finger region" description="C4-type 1">
    <location>
        <begin position="602"/>
        <end position="633"/>
    </location>
</feature>
<feature type="zinc finger region" description="C4-type 2">
    <location>
        <begin position="664"/>
        <end position="691"/>
    </location>
</feature>
<feature type="zinc finger region" description="C4-type 3">
    <location>
        <begin position="713"/>
        <end position="738"/>
    </location>
</feature>
<feature type="region of interest" description="Disordered" evidence="3">
    <location>
        <begin position="34"/>
        <end position="70"/>
    </location>
</feature>
<feature type="region of interest" description="Interaction with DNA" evidence="1">
    <location>
        <begin position="197"/>
        <end position="202"/>
    </location>
</feature>
<feature type="active site" description="O-(5'-phospho-DNA)-tyrosine intermediate" evidence="2">
    <location>
        <position position="324"/>
    </location>
</feature>
<feature type="binding site" evidence="1">
    <location>
        <position position="9"/>
    </location>
    <ligand>
        <name>Mg(2+)</name>
        <dbReference type="ChEBI" id="CHEBI:18420"/>
        <note>catalytic</note>
    </ligand>
</feature>
<feature type="binding site" evidence="1">
    <location>
        <position position="116"/>
    </location>
    <ligand>
        <name>Mg(2+)</name>
        <dbReference type="ChEBI" id="CHEBI:18420"/>
        <note>catalytic</note>
    </ligand>
</feature>
<feature type="site" description="Interaction with DNA" evidence="1">
    <location>
        <position position="33"/>
    </location>
</feature>
<feature type="site" description="Interaction with DNA" evidence="1">
    <location>
        <position position="173"/>
    </location>
</feature>
<feature type="site" description="Interaction with DNA" evidence="1">
    <location>
        <position position="174"/>
    </location>
</feature>
<feature type="site" description="Interaction with DNA" evidence="1">
    <location>
        <position position="177"/>
    </location>
</feature>
<feature type="site" description="Interaction with DNA" evidence="1">
    <location>
        <position position="182"/>
    </location>
</feature>
<feature type="site" description="Interaction with DNA" evidence="1">
    <location>
        <position position="189"/>
    </location>
</feature>
<feature type="site" description="Interaction with DNA" evidence="1">
    <location>
        <position position="326"/>
    </location>
</feature>
<feature type="site" description="Interaction with DNA" evidence="1">
    <location>
        <position position="512"/>
    </location>
</feature>
<reference key="1">
    <citation type="journal article" date="2000" name="Nature">
        <title>Complete genome sequence of Pseudomonas aeruginosa PAO1, an opportunistic pathogen.</title>
        <authorList>
            <person name="Stover C.K."/>
            <person name="Pham X.-Q.T."/>
            <person name="Erwin A.L."/>
            <person name="Mizoguchi S.D."/>
            <person name="Warrener P."/>
            <person name="Hickey M.J."/>
            <person name="Brinkman F.S.L."/>
            <person name="Hufnagle W.O."/>
            <person name="Kowalik D.J."/>
            <person name="Lagrou M."/>
            <person name="Garber R.L."/>
            <person name="Goltry L."/>
            <person name="Tolentino E."/>
            <person name="Westbrock-Wadman S."/>
            <person name="Yuan Y."/>
            <person name="Brody L.L."/>
            <person name="Coulter S.N."/>
            <person name="Folger K.R."/>
            <person name="Kas A."/>
            <person name="Larbig K."/>
            <person name="Lim R.M."/>
            <person name="Smith K.A."/>
            <person name="Spencer D.H."/>
            <person name="Wong G.K.-S."/>
            <person name="Wu Z."/>
            <person name="Paulsen I.T."/>
            <person name="Reizer J."/>
            <person name="Saier M.H. Jr."/>
            <person name="Hancock R.E.W."/>
            <person name="Lory S."/>
            <person name="Olson M.V."/>
        </authorList>
    </citation>
    <scope>NUCLEOTIDE SEQUENCE [LARGE SCALE GENOMIC DNA]</scope>
    <source>
        <strain>ATCC 15692 / DSM 22644 / CIP 104116 / JCM 14847 / LMG 12228 / 1C / PRS 101 / PAO1</strain>
    </source>
</reference>
<dbReference type="EC" id="5.6.2.1" evidence="1"/>
<dbReference type="EMBL" id="AE004091">
    <property type="protein sequence ID" value="AAG06399.1"/>
    <property type="molecule type" value="Genomic_DNA"/>
</dbReference>
<dbReference type="PIR" id="D83269">
    <property type="entry name" value="D83269"/>
</dbReference>
<dbReference type="RefSeq" id="NP_251701.1">
    <property type="nucleotide sequence ID" value="NC_002516.2"/>
</dbReference>
<dbReference type="RefSeq" id="WP_003091201.1">
    <property type="nucleotide sequence ID" value="NZ_QZGE01000009.1"/>
</dbReference>
<dbReference type="SMR" id="Q9HZJ5"/>
<dbReference type="FunCoup" id="Q9HZJ5">
    <property type="interactions" value="681"/>
</dbReference>
<dbReference type="STRING" id="208964.PA3011"/>
<dbReference type="PaxDb" id="208964-PA3011"/>
<dbReference type="GeneID" id="880353"/>
<dbReference type="KEGG" id="pae:PA3011"/>
<dbReference type="PATRIC" id="fig|208964.12.peg.3159"/>
<dbReference type="PseudoCAP" id="PA3011"/>
<dbReference type="HOGENOM" id="CLU_002929_4_3_6"/>
<dbReference type="InParanoid" id="Q9HZJ5"/>
<dbReference type="OrthoDB" id="9804262at2"/>
<dbReference type="PhylomeDB" id="Q9HZJ5"/>
<dbReference type="BioCyc" id="PAER208964:G1FZ6-3063-MONOMER"/>
<dbReference type="Proteomes" id="UP000002438">
    <property type="component" value="Chromosome"/>
</dbReference>
<dbReference type="GO" id="GO:0005694">
    <property type="term" value="C:chromosome"/>
    <property type="evidence" value="ECO:0007669"/>
    <property type="project" value="InterPro"/>
</dbReference>
<dbReference type="GO" id="GO:0003677">
    <property type="term" value="F:DNA binding"/>
    <property type="evidence" value="ECO:0007669"/>
    <property type="project" value="UniProtKB-KW"/>
</dbReference>
<dbReference type="GO" id="GO:0003917">
    <property type="term" value="F:DNA topoisomerase type I (single strand cut, ATP-independent) activity"/>
    <property type="evidence" value="ECO:0007669"/>
    <property type="project" value="UniProtKB-UniRule"/>
</dbReference>
<dbReference type="GO" id="GO:0008270">
    <property type="term" value="F:zinc ion binding"/>
    <property type="evidence" value="ECO:0007669"/>
    <property type="project" value="UniProtKB-KW"/>
</dbReference>
<dbReference type="GO" id="GO:0006265">
    <property type="term" value="P:DNA topological change"/>
    <property type="evidence" value="ECO:0007669"/>
    <property type="project" value="UniProtKB-UniRule"/>
</dbReference>
<dbReference type="CDD" id="cd00186">
    <property type="entry name" value="TOP1Ac"/>
    <property type="match status" value="1"/>
</dbReference>
<dbReference type="CDD" id="cd03363">
    <property type="entry name" value="TOPRIM_TopoIA_TopoI"/>
    <property type="match status" value="1"/>
</dbReference>
<dbReference type="FunFam" id="1.10.290.10:FF:000002">
    <property type="entry name" value="DNA topoisomerase 1"/>
    <property type="match status" value="1"/>
</dbReference>
<dbReference type="FunFam" id="3.30.65.10:FF:000002">
    <property type="entry name" value="DNA topoisomerase 1"/>
    <property type="match status" value="1"/>
</dbReference>
<dbReference type="FunFam" id="3.40.50.140:FF:000001">
    <property type="entry name" value="DNA topoisomerase 1"/>
    <property type="match status" value="1"/>
</dbReference>
<dbReference type="Gene3D" id="2.20.25.10">
    <property type="match status" value="1"/>
</dbReference>
<dbReference type="Gene3D" id="3.40.50.140">
    <property type="match status" value="1"/>
</dbReference>
<dbReference type="Gene3D" id="3.30.65.10">
    <property type="entry name" value="Bacterial Topoisomerase I, domain 1"/>
    <property type="match status" value="3"/>
</dbReference>
<dbReference type="Gene3D" id="1.10.460.10">
    <property type="entry name" value="Topoisomerase I, domain 2"/>
    <property type="match status" value="1"/>
</dbReference>
<dbReference type="Gene3D" id="2.70.20.10">
    <property type="entry name" value="Topoisomerase I, domain 3"/>
    <property type="match status" value="1"/>
</dbReference>
<dbReference type="Gene3D" id="1.10.290.10">
    <property type="entry name" value="Topoisomerase I, domain 4"/>
    <property type="match status" value="1"/>
</dbReference>
<dbReference type="HAMAP" id="MF_00952">
    <property type="entry name" value="Topoisom_1_prok"/>
    <property type="match status" value="1"/>
</dbReference>
<dbReference type="InterPro" id="IPR049330">
    <property type="entry name" value="TOP1_Znf"/>
</dbReference>
<dbReference type="InterPro" id="IPR000380">
    <property type="entry name" value="Topo_IA"/>
</dbReference>
<dbReference type="InterPro" id="IPR003601">
    <property type="entry name" value="Topo_IA_2"/>
</dbReference>
<dbReference type="InterPro" id="IPR023406">
    <property type="entry name" value="Topo_IA_AS"/>
</dbReference>
<dbReference type="InterPro" id="IPR013497">
    <property type="entry name" value="Topo_IA_cen"/>
</dbReference>
<dbReference type="InterPro" id="IPR013824">
    <property type="entry name" value="Topo_IA_cen_sub1"/>
</dbReference>
<dbReference type="InterPro" id="IPR013825">
    <property type="entry name" value="Topo_IA_cen_sub2"/>
</dbReference>
<dbReference type="InterPro" id="IPR013826">
    <property type="entry name" value="Topo_IA_cen_sub3"/>
</dbReference>
<dbReference type="InterPro" id="IPR023405">
    <property type="entry name" value="Topo_IA_core_domain"/>
</dbReference>
<dbReference type="InterPro" id="IPR003602">
    <property type="entry name" value="Topo_IA_DNA-bd_dom"/>
</dbReference>
<dbReference type="InterPro" id="IPR013498">
    <property type="entry name" value="Topo_IA_Znf"/>
</dbReference>
<dbReference type="InterPro" id="IPR005733">
    <property type="entry name" value="TopoI_bac-type"/>
</dbReference>
<dbReference type="InterPro" id="IPR013263">
    <property type="entry name" value="TopoI_Znr_bac"/>
</dbReference>
<dbReference type="InterPro" id="IPR028612">
    <property type="entry name" value="Topoisom_1_IA"/>
</dbReference>
<dbReference type="InterPro" id="IPR006171">
    <property type="entry name" value="TOPRIM_dom"/>
</dbReference>
<dbReference type="InterPro" id="IPR034149">
    <property type="entry name" value="TOPRIM_TopoI"/>
</dbReference>
<dbReference type="NCBIfam" id="TIGR01051">
    <property type="entry name" value="topA_bact"/>
    <property type="match status" value="1"/>
</dbReference>
<dbReference type="PANTHER" id="PTHR42785:SF1">
    <property type="entry name" value="DNA TOPOISOMERASE"/>
    <property type="match status" value="1"/>
</dbReference>
<dbReference type="PANTHER" id="PTHR42785">
    <property type="entry name" value="DNA TOPOISOMERASE, TYPE IA, CORE"/>
    <property type="match status" value="1"/>
</dbReference>
<dbReference type="Pfam" id="PF01131">
    <property type="entry name" value="Topoisom_bac"/>
    <property type="match status" value="1"/>
</dbReference>
<dbReference type="Pfam" id="PF01751">
    <property type="entry name" value="Toprim"/>
    <property type="match status" value="1"/>
</dbReference>
<dbReference type="Pfam" id="PF21372">
    <property type="entry name" value="Zn_ribbon_bTOP1"/>
    <property type="match status" value="1"/>
</dbReference>
<dbReference type="Pfam" id="PF01396">
    <property type="entry name" value="Zn_ribbon_Top1"/>
    <property type="match status" value="2"/>
</dbReference>
<dbReference type="Pfam" id="PF08272">
    <property type="entry name" value="Zn_Ribbon_Topo"/>
    <property type="match status" value="2"/>
</dbReference>
<dbReference type="PRINTS" id="PR00417">
    <property type="entry name" value="PRTPISMRASEI"/>
</dbReference>
<dbReference type="SMART" id="SM00437">
    <property type="entry name" value="TOP1Ac"/>
    <property type="match status" value="1"/>
</dbReference>
<dbReference type="SMART" id="SM00436">
    <property type="entry name" value="TOP1Bc"/>
    <property type="match status" value="1"/>
</dbReference>
<dbReference type="SMART" id="SM00493">
    <property type="entry name" value="TOPRIM"/>
    <property type="match status" value="1"/>
</dbReference>
<dbReference type="SUPFAM" id="SSF56712">
    <property type="entry name" value="Prokaryotic type I DNA topoisomerase"/>
    <property type="match status" value="1"/>
</dbReference>
<dbReference type="SUPFAM" id="SSF57783">
    <property type="entry name" value="Zinc beta-ribbon"/>
    <property type="match status" value="3"/>
</dbReference>
<dbReference type="PROSITE" id="PS00396">
    <property type="entry name" value="TOPO_IA_1"/>
    <property type="match status" value="1"/>
</dbReference>
<dbReference type="PROSITE" id="PS52039">
    <property type="entry name" value="TOPO_IA_2"/>
    <property type="match status" value="1"/>
</dbReference>
<dbReference type="PROSITE" id="PS50880">
    <property type="entry name" value="TOPRIM"/>
    <property type="match status" value="1"/>
</dbReference>